<proteinExistence type="inferred from homology"/>
<reference key="1">
    <citation type="journal article" date="2004" name="Proc. Natl. Acad. Sci. U.S.A.">
        <title>Complete genomes of two clinical Staphylococcus aureus strains: evidence for the rapid evolution of virulence and drug resistance.</title>
        <authorList>
            <person name="Holden M.T.G."/>
            <person name="Feil E.J."/>
            <person name="Lindsay J.A."/>
            <person name="Peacock S.J."/>
            <person name="Day N.P.J."/>
            <person name="Enright M.C."/>
            <person name="Foster T.J."/>
            <person name="Moore C.E."/>
            <person name="Hurst L."/>
            <person name="Atkin R."/>
            <person name="Barron A."/>
            <person name="Bason N."/>
            <person name="Bentley S.D."/>
            <person name="Chillingworth C."/>
            <person name="Chillingworth T."/>
            <person name="Churcher C."/>
            <person name="Clark L."/>
            <person name="Corton C."/>
            <person name="Cronin A."/>
            <person name="Doggett J."/>
            <person name="Dowd L."/>
            <person name="Feltwell T."/>
            <person name="Hance Z."/>
            <person name="Harris B."/>
            <person name="Hauser H."/>
            <person name="Holroyd S."/>
            <person name="Jagels K."/>
            <person name="James K.D."/>
            <person name="Lennard N."/>
            <person name="Line A."/>
            <person name="Mayes R."/>
            <person name="Moule S."/>
            <person name="Mungall K."/>
            <person name="Ormond D."/>
            <person name="Quail M.A."/>
            <person name="Rabbinowitsch E."/>
            <person name="Rutherford K.M."/>
            <person name="Sanders M."/>
            <person name="Sharp S."/>
            <person name="Simmonds M."/>
            <person name="Stevens K."/>
            <person name="Whitehead S."/>
            <person name="Barrell B.G."/>
            <person name="Spratt B.G."/>
            <person name="Parkhill J."/>
        </authorList>
    </citation>
    <scope>NUCLEOTIDE SEQUENCE [LARGE SCALE GENOMIC DNA]</scope>
    <source>
        <strain>MSSA476</strain>
    </source>
</reference>
<keyword id="KW-0963">Cytoplasm</keyword>
<keyword id="KW-0342">GTP-binding</keyword>
<keyword id="KW-0460">Magnesium</keyword>
<keyword id="KW-0479">Metal-binding</keyword>
<keyword id="KW-0501">Molybdenum cofactor biosynthesis</keyword>
<keyword id="KW-0547">Nucleotide-binding</keyword>
<keyword id="KW-0808">Transferase</keyword>
<protein>
    <recommendedName>
        <fullName evidence="1">Probable molybdenum cofactor guanylyltransferase</fullName>
        <shortName evidence="1">MoCo guanylyltransferase</shortName>
        <ecNumber evidence="1">2.7.7.77</ecNumber>
    </recommendedName>
    <alternativeName>
        <fullName evidence="1">GTP:molybdopterin guanylyltransferase</fullName>
    </alternativeName>
    <alternativeName>
        <fullName evidence="1">Mo-MPT guanylyltransferase</fullName>
    </alternativeName>
    <alternativeName>
        <fullName evidence="1">Molybdopterin guanylyltransferase</fullName>
    </alternativeName>
    <alternativeName>
        <fullName evidence="1">Molybdopterin-guanine dinucleotide synthase</fullName>
        <shortName evidence="1">MGD synthase</shortName>
    </alternativeName>
</protein>
<name>MOBA_STAAS</name>
<comment type="function">
    <text evidence="1">Transfers a GMP moiety from GTP to Mo-molybdopterin (Mo-MPT) cofactor (Moco or molybdenum cofactor) to form Mo-molybdopterin guanine dinucleotide (Mo-MGD) cofactor.</text>
</comment>
<comment type="catalytic activity">
    <reaction evidence="1">
        <text>Mo-molybdopterin + GTP + H(+) = Mo-molybdopterin guanine dinucleotide + diphosphate</text>
        <dbReference type="Rhea" id="RHEA:34243"/>
        <dbReference type="ChEBI" id="CHEBI:15378"/>
        <dbReference type="ChEBI" id="CHEBI:33019"/>
        <dbReference type="ChEBI" id="CHEBI:37565"/>
        <dbReference type="ChEBI" id="CHEBI:71302"/>
        <dbReference type="ChEBI" id="CHEBI:71310"/>
        <dbReference type="EC" id="2.7.7.77"/>
    </reaction>
</comment>
<comment type="cofactor">
    <cofactor evidence="1">
        <name>Mg(2+)</name>
        <dbReference type="ChEBI" id="CHEBI:18420"/>
    </cofactor>
</comment>
<comment type="subcellular location">
    <subcellularLocation>
        <location evidence="1">Cytoplasm</location>
    </subcellularLocation>
</comment>
<comment type="domain">
    <text evidence="1">The N-terminal domain determines nucleotide recognition and specific binding, while the C-terminal domain determines the specific binding to the target protein.</text>
</comment>
<comment type="similarity">
    <text evidence="1">Belongs to the MobA family.</text>
</comment>
<accession>Q6G753</accession>
<sequence>MKAIILAGGHSVRFGKPKAFAEVNGETFYSRVIKTLESTNMFNEIIISTNAQLATQFKYPNVVIDDENHNDKGPLAGIYTIMKQHPEEELFFVVSVDTPMITGKAVSTLYQFLVSHLIENHLDVAAFKEDGRFIPTIAFYSPNALGAITKALHSDNYSFKNVYHELSTDYLDVRDVDAPSYWYKNINYQHDLDALIQKL</sequence>
<evidence type="ECO:0000255" key="1">
    <source>
        <dbReference type="HAMAP-Rule" id="MF_00316"/>
    </source>
</evidence>
<dbReference type="EC" id="2.7.7.77" evidence="1"/>
<dbReference type="EMBL" id="BX571857">
    <property type="protein sequence ID" value="CAG43970.1"/>
    <property type="molecule type" value="Genomic_DNA"/>
</dbReference>
<dbReference type="RefSeq" id="WP_000643988.1">
    <property type="nucleotide sequence ID" value="NC_002953.3"/>
</dbReference>
<dbReference type="SMR" id="Q6G753"/>
<dbReference type="KEGG" id="sas:SAS2159"/>
<dbReference type="HOGENOM" id="CLU_055597_2_0_9"/>
<dbReference type="GO" id="GO:0005737">
    <property type="term" value="C:cytoplasm"/>
    <property type="evidence" value="ECO:0007669"/>
    <property type="project" value="UniProtKB-SubCell"/>
</dbReference>
<dbReference type="GO" id="GO:0005525">
    <property type="term" value="F:GTP binding"/>
    <property type="evidence" value="ECO:0007669"/>
    <property type="project" value="UniProtKB-UniRule"/>
</dbReference>
<dbReference type="GO" id="GO:0046872">
    <property type="term" value="F:metal ion binding"/>
    <property type="evidence" value="ECO:0007669"/>
    <property type="project" value="UniProtKB-KW"/>
</dbReference>
<dbReference type="GO" id="GO:0061603">
    <property type="term" value="F:molybdenum cofactor guanylyltransferase activity"/>
    <property type="evidence" value="ECO:0007669"/>
    <property type="project" value="UniProtKB-EC"/>
</dbReference>
<dbReference type="GO" id="GO:0006777">
    <property type="term" value="P:Mo-molybdopterin cofactor biosynthetic process"/>
    <property type="evidence" value="ECO:0007669"/>
    <property type="project" value="UniProtKB-KW"/>
</dbReference>
<dbReference type="CDD" id="cd02503">
    <property type="entry name" value="MobA"/>
    <property type="match status" value="1"/>
</dbReference>
<dbReference type="Gene3D" id="3.90.550.10">
    <property type="entry name" value="Spore Coat Polysaccharide Biosynthesis Protein SpsA, Chain A"/>
    <property type="match status" value="1"/>
</dbReference>
<dbReference type="HAMAP" id="MF_00316">
    <property type="entry name" value="MobA"/>
    <property type="match status" value="1"/>
</dbReference>
<dbReference type="InterPro" id="IPR025877">
    <property type="entry name" value="MobA-like_NTP_Trfase"/>
</dbReference>
<dbReference type="InterPro" id="IPR013482">
    <property type="entry name" value="Molybde_CF_guanTrfase"/>
</dbReference>
<dbReference type="InterPro" id="IPR029044">
    <property type="entry name" value="Nucleotide-diphossugar_trans"/>
</dbReference>
<dbReference type="NCBIfam" id="NF001457">
    <property type="entry name" value="PRK00317.1-3"/>
    <property type="match status" value="1"/>
</dbReference>
<dbReference type="PANTHER" id="PTHR19136">
    <property type="entry name" value="MOLYBDENUM COFACTOR GUANYLYLTRANSFERASE"/>
    <property type="match status" value="1"/>
</dbReference>
<dbReference type="PANTHER" id="PTHR19136:SF81">
    <property type="entry name" value="MOLYBDENUM COFACTOR GUANYLYLTRANSFERASE"/>
    <property type="match status" value="1"/>
</dbReference>
<dbReference type="Pfam" id="PF12804">
    <property type="entry name" value="NTP_transf_3"/>
    <property type="match status" value="1"/>
</dbReference>
<dbReference type="SUPFAM" id="SSF53448">
    <property type="entry name" value="Nucleotide-diphospho-sugar transferases"/>
    <property type="match status" value="1"/>
</dbReference>
<gene>
    <name evidence="1" type="primary">mobA</name>
    <name type="ordered locus">SAS2159</name>
</gene>
<feature type="chain" id="PRO_0000134915" description="Probable molybdenum cofactor guanylyltransferase">
    <location>
        <begin position="1"/>
        <end position="199"/>
    </location>
</feature>
<feature type="binding site" evidence="1">
    <location>
        <begin position="6"/>
        <end position="8"/>
    </location>
    <ligand>
        <name>GTP</name>
        <dbReference type="ChEBI" id="CHEBI:37565"/>
    </ligand>
</feature>
<feature type="binding site" evidence="1">
    <location>
        <position position="18"/>
    </location>
    <ligand>
        <name>GTP</name>
        <dbReference type="ChEBI" id="CHEBI:37565"/>
    </ligand>
</feature>
<feature type="binding site" evidence="1">
    <location>
        <position position="65"/>
    </location>
    <ligand>
        <name>GTP</name>
        <dbReference type="ChEBI" id="CHEBI:37565"/>
    </ligand>
</feature>
<feature type="binding site" evidence="1">
    <location>
        <position position="97"/>
    </location>
    <ligand>
        <name>GTP</name>
        <dbReference type="ChEBI" id="CHEBI:37565"/>
    </ligand>
</feature>
<feature type="binding site" evidence="1">
    <location>
        <position position="97"/>
    </location>
    <ligand>
        <name>Mg(2+)</name>
        <dbReference type="ChEBI" id="CHEBI:18420"/>
    </ligand>
</feature>
<organism>
    <name type="scientific">Staphylococcus aureus (strain MSSA476)</name>
    <dbReference type="NCBI Taxonomy" id="282459"/>
    <lineage>
        <taxon>Bacteria</taxon>
        <taxon>Bacillati</taxon>
        <taxon>Bacillota</taxon>
        <taxon>Bacilli</taxon>
        <taxon>Bacillales</taxon>
        <taxon>Staphylococcaceae</taxon>
        <taxon>Staphylococcus</taxon>
    </lineage>
</organism>